<name>PDEI_ECOLI</name>
<dbReference type="EC" id="3.1.4.52" evidence="1"/>
<dbReference type="EMBL" id="U00096">
    <property type="protein sequence ID" value="AAC73920.1"/>
    <property type="molecule type" value="Genomic_DNA"/>
</dbReference>
<dbReference type="EMBL" id="AP009048">
    <property type="protein sequence ID" value="BAA35528.1"/>
    <property type="molecule type" value="Genomic_DNA"/>
</dbReference>
<dbReference type="PIR" id="A64821">
    <property type="entry name" value="A64821"/>
</dbReference>
<dbReference type="RefSeq" id="NP_415354.1">
    <property type="nucleotide sequence ID" value="NC_000913.3"/>
</dbReference>
<dbReference type="RefSeq" id="WP_001360263.1">
    <property type="nucleotide sequence ID" value="NZ_LN832404.1"/>
</dbReference>
<dbReference type="SMR" id="P75800"/>
<dbReference type="BioGRID" id="4259986">
    <property type="interactions" value="11"/>
</dbReference>
<dbReference type="FunCoup" id="P75800">
    <property type="interactions" value="2"/>
</dbReference>
<dbReference type="STRING" id="511145.b0833"/>
<dbReference type="jPOST" id="P75800"/>
<dbReference type="PaxDb" id="511145-b0833"/>
<dbReference type="EnsemblBacteria" id="AAC73920">
    <property type="protein sequence ID" value="AAC73920"/>
    <property type="gene ID" value="b0833"/>
</dbReference>
<dbReference type="GeneID" id="945462"/>
<dbReference type="KEGG" id="ecj:JW0817"/>
<dbReference type="KEGG" id="eco:b0833"/>
<dbReference type="KEGG" id="ecoc:C3026_05220"/>
<dbReference type="PATRIC" id="fig|1411691.4.peg.1445"/>
<dbReference type="EchoBASE" id="EB3249"/>
<dbReference type="eggNOG" id="COG2200">
    <property type="taxonomic scope" value="Bacteria"/>
</dbReference>
<dbReference type="HOGENOM" id="CLU_000445_78_2_6"/>
<dbReference type="InParanoid" id="P75800"/>
<dbReference type="OMA" id="RFYEMNP"/>
<dbReference type="OrthoDB" id="6635966at2"/>
<dbReference type="PhylomeDB" id="P75800"/>
<dbReference type="BioCyc" id="EcoCyc:G6433-MONOMER"/>
<dbReference type="PRO" id="PR:P75800"/>
<dbReference type="Proteomes" id="UP000000625">
    <property type="component" value="Chromosome"/>
</dbReference>
<dbReference type="GO" id="GO:0005886">
    <property type="term" value="C:plasma membrane"/>
    <property type="evidence" value="ECO:0000318"/>
    <property type="project" value="GO_Central"/>
</dbReference>
<dbReference type="GO" id="GO:0071111">
    <property type="term" value="F:cyclic-guanylate-specific phosphodiesterase activity"/>
    <property type="evidence" value="ECO:0000316"/>
    <property type="project" value="EcoCyc"/>
</dbReference>
<dbReference type="GO" id="GO:1900190">
    <property type="term" value="P:regulation of single-species biofilm formation"/>
    <property type="evidence" value="ECO:0000318"/>
    <property type="project" value="GO_Central"/>
</dbReference>
<dbReference type="CDD" id="cd01948">
    <property type="entry name" value="EAL"/>
    <property type="match status" value="1"/>
</dbReference>
<dbReference type="FunFam" id="3.20.20.450:FF:000013">
    <property type="entry name" value="Membrane-anchored cyclic-di-GMP phosphodiesterase"/>
    <property type="match status" value="1"/>
</dbReference>
<dbReference type="Gene3D" id="3.20.20.450">
    <property type="entry name" value="EAL domain"/>
    <property type="match status" value="1"/>
</dbReference>
<dbReference type="InterPro" id="IPR033418">
    <property type="entry name" value="CHASE9"/>
</dbReference>
<dbReference type="InterPro" id="IPR050706">
    <property type="entry name" value="Cyclic-di-GMP_PDE-like"/>
</dbReference>
<dbReference type="InterPro" id="IPR001633">
    <property type="entry name" value="EAL_dom"/>
</dbReference>
<dbReference type="InterPro" id="IPR035919">
    <property type="entry name" value="EAL_sf"/>
</dbReference>
<dbReference type="PANTHER" id="PTHR33121:SF81">
    <property type="entry name" value="CYCLIC DI-GMP PHOSPHODIESTERASE PDEB-RELATED"/>
    <property type="match status" value="1"/>
</dbReference>
<dbReference type="PANTHER" id="PTHR33121">
    <property type="entry name" value="CYCLIC DI-GMP PHOSPHODIESTERASE PDEF"/>
    <property type="match status" value="1"/>
</dbReference>
<dbReference type="Pfam" id="PF17153">
    <property type="entry name" value="CHASE9"/>
    <property type="match status" value="1"/>
</dbReference>
<dbReference type="Pfam" id="PF00563">
    <property type="entry name" value="EAL"/>
    <property type="match status" value="1"/>
</dbReference>
<dbReference type="SMART" id="SM00052">
    <property type="entry name" value="EAL"/>
    <property type="match status" value="1"/>
</dbReference>
<dbReference type="SUPFAM" id="SSF141868">
    <property type="entry name" value="EAL domain-like"/>
    <property type="match status" value="1"/>
</dbReference>
<dbReference type="PROSITE" id="PS50883">
    <property type="entry name" value="EAL"/>
    <property type="match status" value="1"/>
</dbReference>
<keyword id="KW-0973">c-di-GMP</keyword>
<keyword id="KW-1003">Cell membrane</keyword>
<keyword id="KW-0378">Hydrolase</keyword>
<keyword id="KW-0472">Membrane</keyword>
<keyword id="KW-1185">Reference proteome</keyword>
<keyword id="KW-0812">Transmembrane</keyword>
<keyword id="KW-1133">Transmembrane helix</keyword>
<proteinExistence type="evidence at protein level"/>
<sequence>MLSLYEKIKIRLIILFLLAALSFIGLFFIINYQLVSERAVKRADSRFELIQKNVGYFFKDIERSALTLKDSLYLLKNTEEIQRAVILKMEMMPFLDSVGLVLDDNKYYLFSRRANDKIVVYHQEQVNGPLVDESGRVIFADFNPSKRPWSVASDDSNNSWNPAYNCFDRPGKKCISFTLHINGKDHDLLAVDKIHVDLNWRYLNEYLDQISANDEVLFLKQGHEIIAKNQLAREKLIIYNSEGNYNIIDSVDTEYIEKTSAVPNNALFEIYFYYPGGNLLNASDKLFYLPFAFIIIVLLVVYLMTTRVFRRQFSEMTELVNTLAFLPDSTDQIEALKIREGDAKEIISIKNSIAEMKDAEIERSNKLLSLISYDQESGFIKNMAIIESNNNQYLAVGIIKLCGLEAVEAVFGVDERNKIVRKLCQRIAEKYAQCCDIVTFNADLYLLLCRENVQTFTRKIAMVNDFDSSFGYRNLRIHKSAICEPLQGENAWSYAEKLKLAISSIRDHMFSEFIFCDDAKLNEIEENIWIARNIRHAMEIGELFLVYQPIVDINTRAILGAEALCRWVSAERGIISPLKFITIAEDIGFINELGYQIIKTAMGEFRHFSQRASLKDDFLLHINVSPWQLNEPHFHERFTTIMKENGLKANSLCVEITETVIERINEHFYLNIEQLRKQGVRISIDDFGTGLSNLKRFYEINPDSIKVDSQFTGDIFGTAGKIVRIIFDLARYNRIPVIAEGVESEDVARELIKLGCVQAQGYLYQKPMPFSAWDKSGKLVKE</sequence>
<reference key="1">
    <citation type="journal article" date="1996" name="DNA Res.">
        <title>A 718-kb DNA sequence of the Escherichia coli K-12 genome corresponding to the 12.7-28.0 min region on the linkage map.</title>
        <authorList>
            <person name="Oshima T."/>
            <person name="Aiba H."/>
            <person name="Baba T."/>
            <person name="Fujita K."/>
            <person name="Hayashi K."/>
            <person name="Honjo A."/>
            <person name="Ikemoto K."/>
            <person name="Inada T."/>
            <person name="Itoh T."/>
            <person name="Kajihara M."/>
            <person name="Kanai K."/>
            <person name="Kashimoto K."/>
            <person name="Kimura S."/>
            <person name="Kitagawa M."/>
            <person name="Makino K."/>
            <person name="Masuda S."/>
            <person name="Miki T."/>
            <person name="Mizobuchi K."/>
            <person name="Mori H."/>
            <person name="Motomura K."/>
            <person name="Nakamura Y."/>
            <person name="Nashimoto H."/>
            <person name="Nishio Y."/>
            <person name="Saito N."/>
            <person name="Sampei G."/>
            <person name="Seki Y."/>
            <person name="Tagami H."/>
            <person name="Takemoto K."/>
            <person name="Wada C."/>
            <person name="Yamamoto Y."/>
            <person name="Yano M."/>
            <person name="Horiuchi T."/>
        </authorList>
    </citation>
    <scope>NUCLEOTIDE SEQUENCE [LARGE SCALE GENOMIC DNA]</scope>
    <source>
        <strain>K12 / W3110 / ATCC 27325 / DSM 5911</strain>
    </source>
</reference>
<reference key="2">
    <citation type="journal article" date="1997" name="Science">
        <title>The complete genome sequence of Escherichia coli K-12.</title>
        <authorList>
            <person name="Blattner F.R."/>
            <person name="Plunkett G. III"/>
            <person name="Bloch C.A."/>
            <person name="Perna N.T."/>
            <person name="Burland V."/>
            <person name="Riley M."/>
            <person name="Collado-Vides J."/>
            <person name="Glasner J.D."/>
            <person name="Rode C.K."/>
            <person name="Mayhew G.F."/>
            <person name="Gregor J."/>
            <person name="Davis N.W."/>
            <person name="Kirkpatrick H.A."/>
            <person name="Goeden M.A."/>
            <person name="Rose D.J."/>
            <person name="Mau B."/>
            <person name="Shao Y."/>
        </authorList>
    </citation>
    <scope>NUCLEOTIDE SEQUENCE [LARGE SCALE GENOMIC DNA]</scope>
    <source>
        <strain>K12 / MG1655 / ATCC 47076</strain>
    </source>
</reference>
<reference key="3">
    <citation type="journal article" date="2006" name="Mol. Syst. Biol.">
        <title>Highly accurate genome sequences of Escherichia coli K-12 strains MG1655 and W3110.</title>
        <authorList>
            <person name="Hayashi K."/>
            <person name="Morooka N."/>
            <person name="Yamamoto Y."/>
            <person name="Fujita K."/>
            <person name="Isono K."/>
            <person name="Choi S."/>
            <person name="Ohtsubo E."/>
            <person name="Baba T."/>
            <person name="Wanner B.L."/>
            <person name="Mori H."/>
            <person name="Horiuchi T."/>
        </authorList>
    </citation>
    <scope>NUCLEOTIDE SEQUENCE [LARGE SCALE GENOMIC DNA]</scope>
    <source>
        <strain>K12 / W3110 / ATCC 27325 / DSM 5911</strain>
    </source>
</reference>
<reference key="4">
    <citation type="journal article" date="2009" name="Mol. Microbiol.">
        <title>Second messenger signalling governs Escherichia coli biofilm induction upon ribosomal stress.</title>
        <authorList>
            <person name="Boehm A."/>
            <person name="Steiner S."/>
            <person name="Zaehringer F."/>
            <person name="Casanova A."/>
            <person name="Hamburger F."/>
            <person name="Ritz D."/>
            <person name="Keck W."/>
            <person name="Ackermann M."/>
            <person name="Schirmer T."/>
            <person name="Jenal U."/>
        </authorList>
    </citation>
    <scope>FUNCTION IN BIOFILM FORMATION</scope>
    <source>
        <strain>K12 / AB400</strain>
    </source>
</reference>
<reference key="5">
    <citation type="journal article" date="2010" name="Cell">
        <title>Second messenger-mediated adjustment of bacterial swimming velocity.</title>
        <authorList>
            <person name="Boehm A."/>
            <person name="Kaiser M."/>
            <person name="Li H."/>
            <person name="Spangler C."/>
            <person name="Kasper C.A."/>
            <person name="Ackermann M."/>
            <person name="Kaever V."/>
            <person name="Sourjik V."/>
            <person name="Roth V."/>
            <person name="Jenal U."/>
        </authorList>
    </citation>
    <scope>DISRUPTION PHENOTYPE</scope>
    <source>
        <strain>K12 / MG1655 / ATCC 47076</strain>
    </source>
</reference>
<reference key="6">
    <citation type="journal article" date="2015" name="J. Bacteriol.">
        <title>Systematic nomenclature for GGDEF and EAL domain-containing cyclic di-GMP turnover proteins of Escherichia coli.</title>
        <authorList>
            <person name="Hengge R."/>
            <person name="Galperin M.Y."/>
            <person name="Ghigo J.M."/>
            <person name="Gomelsky M."/>
            <person name="Green J."/>
            <person name="Hughes K.T."/>
            <person name="Jenal U."/>
            <person name="Landini P."/>
        </authorList>
    </citation>
    <scope>NOMENCLATURE</scope>
</reference>
<comment type="function">
    <text evidence="1 4">Phosphodiesterase (PDE) that catalyzes the hydrolysis of cyclic-di-GMP (c-di-GMP) to 5'-pGpG (By similarity). Overexpression reduces biofilm formation. Cyclic-di-GMP is a second messenger which controls cell surface-associated traits in bacteria (PubMed:19460094).</text>
</comment>
<comment type="catalytic activity">
    <reaction evidence="1">
        <text>3',3'-c-di-GMP + H2O = 5'-phosphoguanylyl(3'-&gt;5')guanosine + H(+)</text>
        <dbReference type="Rhea" id="RHEA:24902"/>
        <dbReference type="ChEBI" id="CHEBI:15377"/>
        <dbReference type="ChEBI" id="CHEBI:15378"/>
        <dbReference type="ChEBI" id="CHEBI:58754"/>
        <dbReference type="ChEBI" id="CHEBI:58805"/>
        <dbReference type="EC" id="3.1.4.52"/>
    </reaction>
</comment>
<comment type="subcellular location">
    <subcellularLocation>
        <location evidence="7">Cell membrane</location>
        <topology evidence="2">Multi-pass membrane protein</topology>
    </subcellularLocation>
</comment>
<comment type="disruption phenotype">
    <text evidence="5">Cells lacking this gene have a weak reduction in swarm size.</text>
</comment>
<evidence type="ECO:0000250" key="1">
    <source>
        <dbReference type="UniProtKB" id="P21514"/>
    </source>
</evidence>
<evidence type="ECO:0000255" key="2"/>
<evidence type="ECO:0000255" key="3">
    <source>
        <dbReference type="PROSITE-ProRule" id="PRU00074"/>
    </source>
</evidence>
<evidence type="ECO:0000269" key="4">
    <source>
    </source>
</evidence>
<evidence type="ECO:0000269" key="5">
    <source>
    </source>
</evidence>
<evidence type="ECO:0000303" key="6">
    <source>
    </source>
</evidence>
<evidence type="ECO:0000305" key="7"/>
<feature type="chain" id="PRO_0000168729" description="Probable cyclic di-GMP phosphodiesterase PdeI">
    <location>
        <begin position="1"/>
        <end position="782"/>
    </location>
</feature>
<feature type="transmembrane region" description="Helical" evidence="2">
    <location>
        <begin position="12"/>
        <end position="32"/>
    </location>
</feature>
<feature type="transmembrane region" description="Helical" evidence="2">
    <location>
        <begin position="286"/>
        <end position="306"/>
    </location>
</feature>
<feature type="domain" description="EAL" evidence="3">
    <location>
        <begin position="527"/>
        <end position="781"/>
    </location>
</feature>
<protein>
    <recommendedName>
        <fullName evidence="7">Probable cyclic di-GMP phosphodiesterase PdeI</fullName>
        <ecNumber evidence="1">3.1.4.52</ecNumber>
    </recommendedName>
</protein>
<organism>
    <name type="scientific">Escherichia coli (strain K12)</name>
    <dbReference type="NCBI Taxonomy" id="83333"/>
    <lineage>
        <taxon>Bacteria</taxon>
        <taxon>Pseudomonadati</taxon>
        <taxon>Pseudomonadota</taxon>
        <taxon>Gammaproteobacteria</taxon>
        <taxon>Enterobacterales</taxon>
        <taxon>Enterobacteriaceae</taxon>
        <taxon>Escherichia</taxon>
    </lineage>
</organism>
<gene>
    <name evidence="6" type="primary">pdeI</name>
    <name type="synonym">yliE</name>
    <name type="ordered locus">b0833</name>
    <name type="ordered locus">JW0817</name>
</gene>
<accession>P75800</accession>